<sequence>MSSSDSDSVSLSIRRRQRRGSSKRISMKESDEESDSSENHPLSESLNKKSKSESDEDDIPIRKRRASSKKNMSNSSSKKRAKVMGNGGLKNGKKTAVVKEEEDFNEIAKPSPKHKRVSKANGSKNGAKSAVKKEESDTDDSVPLRAVSTVSLTPYKSELPSGASTTQNRSPNDEEDEDEDYKWWTSENIDDTQKWTTLEHNGVIFAPPYEPLPKNVKLIYDGNPVNLPPEAEEVAGFYAAMLETDHAKNPVFQDNFFRDFLKVCDECNFNHNIKEFSKCDFTQMFHHFEQKREEKKSMPKEQKKAIKQKKDEEEEKYKWCILDGRKEKVGNFRIEPPGLFRGRGSHPKTGSLKRRVYPEQITINIGEGVPVPEPLPGHQWAEVKHDNTVTWLATWHENINNNVKYVFLAAGSSLKGQSDLKKYEKSRKLKDYIDDIRKGYRKDLKSELTVERQRGTAMYLIDVFALRAGNEKGEDEADTVGCCSLRYEHVTLKPPRTVVFDFLGKDSIRYYNEVEVDPQVFKNLKIFKRPPKKEGDLIFDRLSTNSLNKYLTSLMDGLSAKVFRTYNASYTMAEELKKMPKNLTLADKILFYNRANRTVAILCNHQRSVTKNHDVQMERFAERIKALQYQRMRLRKMMLNLEPKLAKSKPELLAKEEGITDSWIVKHHETLYELEKEKIKKKFDRENEKLAAEDPKSVLPESELEVRLKAADELKKALDAELKSKKVDPGRSSMEQLEKRLNKLNERINVMRTQMIDKDENKTTALGTSKINYIDPRLTYSFSKREDVPIEKLFSKTIRDKFNWAADTPPDWKW</sequence>
<dbReference type="EC" id="5.6.2.1" evidence="3"/>
<dbReference type="EMBL" id="X06201">
    <property type="protein sequence ID" value="CAA29559.1"/>
    <property type="molecule type" value="Genomic_DNA"/>
</dbReference>
<dbReference type="EMBL" id="CU329671">
    <property type="protein sequence ID" value="CAB66458.1"/>
    <property type="molecule type" value="Genomic_DNA"/>
</dbReference>
<dbReference type="PIR" id="S03329">
    <property type="entry name" value="ISZPT1"/>
</dbReference>
<dbReference type="PIR" id="T50327">
    <property type="entry name" value="T50327"/>
</dbReference>
<dbReference type="RefSeq" id="NP_596209.1">
    <property type="nucleotide sequence ID" value="NM_001022128.2"/>
</dbReference>
<dbReference type="SMR" id="P07799"/>
<dbReference type="BioGRID" id="276575">
    <property type="interactions" value="86"/>
</dbReference>
<dbReference type="FunCoup" id="P07799">
    <property type="interactions" value="362"/>
</dbReference>
<dbReference type="STRING" id="284812.P07799"/>
<dbReference type="iPTMnet" id="P07799"/>
<dbReference type="SwissPalm" id="P07799"/>
<dbReference type="PaxDb" id="4896-SPBC1703.14c.1"/>
<dbReference type="EnsemblFungi" id="SPBC1703.14c.1">
    <property type="protein sequence ID" value="SPBC1703.14c.1:pep"/>
    <property type="gene ID" value="SPBC1703.14c"/>
</dbReference>
<dbReference type="GeneID" id="2540032"/>
<dbReference type="KEGG" id="spo:2540032"/>
<dbReference type="PomBase" id="SPBC1703.14c">
    <property type="gene designation" value="top1"/>
</dbReference>
<dbReference type="VEuPathDB" id="FungiDB:SPBC1703.14c"/>
<dbReference type="eggNOG" id="KOG0981">
    <property type="taxonomic scope" value="Eukaryota"/>
</dbReference>
<dbReference type="HOGENOM" id="CLU_009193_1_0_1"/>
<dbReference type="InParanoid" id="P07799"/>
<dbReference type="OMA" id="HRWKEVK"/>
<dbReference type="PhylomeDB" id="P07799"/>
<dbReference type="Reactome" id="R-SPO-4615885">
    <property type="pathway name" value="SUMOylation of DNA replication proteins"/>
</dbReference>
<dbReference type="PRO" id="PR:P07799"/>
<dbReference type="Proteomes" id="UP000002485">
    <property type="component" value="Chromosome II"/>
</dbReference>
<dbReference type="GO" id="GO:0000785">
    <property type="term" value="C:chromatin"/>
    <property type="evidence" value="ECO:0000314"/>
    <property type="project" value="PomBase"/>
</dbReference>
<dbReference type="GO" id="GO:0005829">
    <property type="term" value="C:cytosol"/>
    <property type="evidence" value="ECO:0000314"/>
    <property type="project" value="PomBase"/>
</dbReference>
<dbReference type="GO" id="GO:0005730">
    <property type="term" value="C:nucleolus"/>
    <property type="evidence" value="ECO:0007005"/>
    <property type="project" value="PomBase"/>
</dbReference>
<dbReference type="GO" id="GO:0005634">
    <property type="term" value="C:nucleus"/>
    <property type="evidence" value="ECO:0000314"/>
    <property type="project" value="PomBase"/>
</dbReference>
<dbReference type="GO" id="GO:0003677">
    <property type="term" value="F:DNA binding"/>
    <property type="evidence" value="ECO:0000314"/>
    <property type="project" value="PomBase"/>
</dbReference>
<dbReference type="GO" id="GO:0003917">
    <property type="term" value="F:DNA topoisomerase type I (single strand cut, ATP-independent) activity"/>
    <property type="evidence" value="ECO:0000314"/>
    <property type="project" value="PomBase"/>
</dbReference>
<dbReference type="GO" id="GO:0006338">
    <property type="term" value="P:chromatin remodeling"/>
    <property type="evidence" value="ECO:0000269"/>
    <property type="project" value="PomBase"/>
</dbReference>
<dbReference type="GO" id="GO:0007059">
    <property type="term" value="P:chromosome segregation"/>
    <property type="evidence" value="ECO:0000318"/>
    <property type="project" value="GO_Central"/>
</dbReference>
<dbReference type="GO" id="GO:0006260">
    <property type="term" value="P:DNA replication"/>
    <property type="evidence" value="ECO:0000318"/>
    <property type="project" value="GO_Central"/>
</dbReference>
<dbReference type="GO" id="GO:0006265">
    <property type="term" value="P:DNA topological change"/>
    <property type="evidence" value="ECO:0000315"/>
    <property type="project" value="PomBase"/>
</dbReference>
<dbReference type="GO" id="GO:0007076">
    <property type="term" value="P:mitotic chromosome condensation"/>
    <property type="evidence" value="ECO:0000266"/>
    <property type="project" value="PomBase"/>
</dbReference>
<dbReference type="CDD" id="cd00659">
    <property type="entry name" value="Topo_IB_C"/>
    <property type="match status" value="1"/>
</dbReference>
<dbReference type="CDD" id="cd03488">
    <property type="entry name" value="Topoisomer_IB_N_htopoI_like"/>
    <property type="match status" value="1"/>
</dbReference>
<dbReference type="FunFam" id="1.10.10.41:FF:000001">
    <property type="entry name" value="DNA topoisomerase I"/>
    <property type="match status" value="1"/>
</dbReference>
<dbReference type="FunFam" id="2.170.11.10:FF:000001">
    <property type="entry name" value="DNA topoisomerase I"/>
    <property type="match status" value="1"/>
</dbReference>
<dbReference type="FunFam" id="3.90.15.10:FF:000002">
    <property type="entry name" value="DNA topoisomerase I"/>
    <property type="match status" value="1"/>
</dbReference>
<dbReference type="Gene3D" id="1.10.132.10">
    <property type="match status" value="1"/>
</dbReference>
<dbReference type="Gene3D" id="2.170.11.10">
    <property type="entry name" value="DNA Topoisomerase I, domain 2"/>
    <property type="match status" value="1"/>
</dbReference>
<dbReference type="Gene3D" id="3.90.15.10">
    <property type="entry name" value="Topoisomerase I, Chain A, domain 3"/>
    <property type="match status" value="1"/>
</dbReference>
<dbReference type="Gene3D" id="1.10.10.41">
    <property type="entry name" value="Yeast DNA topoisomerase - domain 1"/>
    <property type="match status" value="1"/>
</dbReference>
<dbReference type="InterPro" id="IPR011010">
    <property type="entry name" value="DNA_brk_join_enz"/>
</dbReference>
<dbReference type="InterPro" id="IPR013034">
    <property type="entry name" value="DNA_topo_DNA_db_N_dom1"/>
</dbReference>
<dbReference type="InterPro" id="IPR013030">
    <property type="entry name" value="DNA_topo_DNA_db_N_dom2"/>
</dbReference>
<dbReference type="InterPro" id="IPR001631">
    <property type="entry name" value="TopoI"/>
</dbReference>
<dbReference type="InterPro" id="IPR025834">
    <property type="entry name" value="TopoI_C_dom"/>
</dbReference>
<dbReference type="InterPro" id="IPR014711">
    <property type="entry name" value="TopoI_cat_a-hlx-sub_euk"/>
</dbReference>
<dbReference type="InterPro" id="IPR014727">
    <property type="entry name" value="TopoI_cat_a/b-sub_euk"/>
</dbReference>
<dbReference type="InterPro" id="IPR013500">
    <property type="entry name" value="TopoI_cat_euk"/>
</dbReference>
<dbReference type="InterPro" id="IPR008336">
    <property type="entry name" value="TopoI_DNA-bd_euk"/>
</dbReference>
<dbReference type="InterPro" id="IPR036202">
    <property type="entry name" value="TopoI_DNA-bd_euk_N_sf"/>
</dbReference>
<dbReference type="InterPro" id="IPR013499">
    <property type="entry name" value="TopoI_euk"/>
</dbReference>
<dbReference type="InterPro" id="IPR018521">
    <property type="entry name" value="TopoIB_AS"/>
</dbReference>
<dbReference type="InterPro" id="IPR048045">
    <property type="entry name" value="Topoisomer_I_DNA-bd"/>
</dbReference>
<dbReference type="InterPro" id="IPR051062">
    <property type="entry name" value="Topoisomerase_IB"/>
</dbReference>
<dbReference type="PANTHER" id="PTHR10290:SF3">
    <property type="entry name" value="DNA TOPOISOMERASE 1"/>
    <property type="match status" value="1"/>
</dbReference>
<dbReference type="PANTHER" id="PTHR10290">
    <property type="entry name" value="DNA TOPOISOMERASE I"/>
    <property type="match status" value="1"/>
</dbReference>
<dbReference type="Pfam" id="PF14370">
    <property type="entry name" value="Topo_C_assoc"/>
    <property type="match status" value="1"/>
</dbReference>
<dbReference type="Pfam" id="PF01028">
    <property type="entry name" value="Topoisom_I"/>
    <property type="match status" value="1"/>
</dbReference>
<dbReference type="Pfam" id="PF02919">
    <property type="entry name" value="Topoisom_I_N"/>
    <property type="match status" value="1"/>
</dbReference>
<dbReference type="PRINTS" id="PR00416">
    <property type="entry name" value="EUTPISMRASEI"/>
</dbReference>
<dbReference type="SMART" id="SM00435">
    <property type="entry name" value="TOPEUc"/>
    <property type="match status" value="1"/>
</dbReference>
<dbReference type="SUPFAM" id="SSF56349">
    <property type="entry name" value="DNA breaking-rejoining enzymes"/>
    <property type="match status" value="1"/>
</dbReference>
<dbReference type="SUPFAM" id="SSF56741">
    <property type="entry name" value="Eukaryotic DNA topoisomerase I, N-terminal DNA-binding fragment"/>
    <property type="match status" value="1"/>
</dbReference>
<dbReference type="PROSITE" id="PS00176">
    <property type="entry name" value="TOPO_IB_1"/>
    <property type="match status" value="1"/>
</dbReference>
<dbReference type="PROSITE" id="PS52038">
    <property type="entry name" value="TOPO_IB_2"/>
    <property type="match status" value="1"/>
</dbReference>
<accession>P07799</accession>
<accession>Q9P7V7</accession>
<evidence type="ECO:0000250" key="1"/>
<evidence type="ECO:0000255" key="2">
    <source>
        <dbReference type="PROSITE-ProRule" id="PRU01382"/>
    </source>
</evidence>
<evidence type="ECO:0000255" key="3">
    <source>
        <dbReference type="PROSITE-ProRule" id="PRU10130"/>
    </source>
</evidence>
<evidence type="ECO:0000256" key="4">
    <source>
        <dbReference type="SAM" id="MobiDB-lite"/>
    </source>
</evidence>
<evidence type="ECO:0000269" key="5">
    <source>
    </source>
</evidence>
<evidence type="ECO:0000269" key="6">
    <source>
    </source>
</evidence>
<evidence type="ECO:0000305" key="7"/>
<reference key="1">
    <citation type="journal article" date="1987" name="Nucleic Acids Res.">
        <title>Cloning and sequencing of Schizosaccharomyces pombe DNA topoisomerase I gene, and effect of gene disruption.</title>
        <authorList>
            <person name="Uemura T."/>
            <person name="Morino K."/>
            <person name="Uzawa S."/>
            <person name="Shiozaki K."/>
            <person name="Yanagida M."/>
        </authorList>
    </citation>
    <scope>NUCLEOTIDE SEQUENCE [GENOMIC DNA]</scope>
    <source>
        <strain>972 / ATCC 24843</strain>
    </source>
</reference>
<reference key="2">
    <citation type="journal article" date="2002" name="Nature">
        <title>The genome sequence of Schizosaccharomyces pombe.</title>
        <authorList>
            <person name="Wood V."/>
            <person name="Gwilliam R."/>
            <person name="Rajandream M.A."/>
            <person name="Lyne M.H."/>
            <person name="Lyne R."/>
            <person name="Stewart A."/>
            <person name="Sgouros J.G."/>
            <person name="Peat N."/>
            <person name="Hayles J."/>
            <person name="Baker S.G."/>
            <person name="Basham D."/>
            <person name="Bowman S."/>
            <person name="Brooks K."/>
            <person name="Brown D."/>
            <person name="Brown S."/>
            <person name="Chillingworth T."/>
            <person name="Churcher C.M."/>
            <person name="Collins M."/>
            <person name="Connor R."/>
            <person name="Cronin A."/>
            <person name="Davis P."/>
            <person name="Feltwell T."/>
            <person name="Fraser A."/>
            <person name="Gentles S."/>
            <person name="Goble A."/>
            <person name="Hamlin N."/>
            <person name="Harris D.E."/>
            <person name="Hidalgo J."/>
            <person name="Hodgson G."/>
            <person name="Holroyd S."/>
            <person name="Hornsby T."/>
            <person name="Howarth S."/>
            <person name="Huckle E.J."/>
            <person name="Hunt S."/>
            <person name="Jagels K."/>
            <person name="James K.D."/>
            <person name="Jones L."/>
            <person name="Jones M."/>
            <person name="Leather S."/>
            <person name="McDonald S."/>
            <person name="McLean J."/>
            <person name="Mooney P."/>
            <person name="Moule S."/>
            <person name="Mungall K.L."/>
            <person name="Murphy L.D."/>
            <person name="Niblett D."/>
            <person name="Odell C."/>
            <person name="Oliver K."/>
            <person name="O'Neil S."/>
            <person name="Pearson D."/>
            <person name="Quail M.A."/>
            <person name="Rabbinowitsch E."/>
            <person name="Rutherford K.M."/>
            <person name="Rutter S."/>
            <person name="Saunders D."/>
            <person name="Seeger K."/>
            <person name="Sharp S."/>
            <person name="Skelton J."/>
            <person name="Simmonds M.N."/>
            <person name="Squares R."/>
            <person name="Squares S."/>
            <person name="Stevens K."/>
            <person name="Taylor K."/>
            <person name="Taylor R.G."/>
            <person name="Tivey A."/>
            <person name="Walsh S.V."/>
            <person name="Warren T."/>
            <person name="Whitehead S."/>
            <person name="Woodward J.R."/>
            <person name="Volckaert G."/>
            <person name="Aert R."/>
            <person name="Robben J."/>
            <person name="Grymonprez B."/>
            <person name="Weltjens I."/>
            <person name="Vanstreels E."/>
            <person name="Rieger M."/>
            <person name="Schaefer M."/>
            <person name="Mueller-Auer S."/>
            <person name="Gabel C."/>
            <person name="Fuchs M."/>
            <person name="Duesterhoeft A."/>
            <person name="Fritzc C."/>
            <person name="Holzer E."/>
            <person name="Moestl D."/>
            <person name="Hilbert H."/>
            <person name="Borzym K."/>
            <person name="Langer I."/>
            <person name="Beck A."/>
            <person name="Lehrach H."/>
            <person name="Reinhardt R."/>
            <person name="Pohl T.M."/>
            <person name="Eger P."/>
            <person name="Zimmermann W."/>
            <person name="Wedler H."/>
            <person name="Wambutt R."/>
            <person name="Purnelle B."/>
            <person name="Goffeau A."/>
            <person name="Cadieu E."/>
            <person name="Dreano S."/>
            <person name="Gloux S."/>
            <person name="Lelaure V."/>
            <person name="Mottier S."/>
            <person name="Galibert F."/>
            <person name="Aves S.J."/>
            <person name="Xiang Z."/>
            <person name="Hunt C."/>
            <person name="Moore K."/>
            <person name="Hurst S.M."/>
            <person name="Lucas M."/>
            <person name="Rochet M."/>
            <person name="Gaillardin C."/>
            <person name="Tallada V.A."/>
            <person name="Garzon A."/>
            <person name="Thode G."/>
            <person name="Daga R.R."/>
            <person name="Cruzado L."/>
            <person name="Jimenez J."/>
            <person name="Sanchez M."/>
            <person name="del Rey F."/>
            <person name="Benito J."/>
            <person name="Dominguez A."/>
            <person name="Revuelta J.L."/>
            <person name="Moreno S."/>
            <person name="Armstrong J."/>
            <person name="Forsburg S.L."/>
            <person name="Cerutti L."/>
            <person name="Lowe T."/>
            <person name="McCombie W.R."/>
            <person name="Paulsen I."/>
            <person name="Potashkin J."/>
            <person name="Shpakovski G.V."/>
            <person name="Ussery D."/>
            <person name="Barrell B.G."/>
            <person name="Nurse P."/>
        </authorList>
    </citation>
    <scope>NUCLEOTIDE SEQUENCE [LARGE SCALE GENOMIC DNA]</scope>
    <source>
        <strain>972 / ATCC 24843</strain>
    </source>
</reference>
<reference key="3">
    <citation type="journal article" date="1989" name="J. Biol. Chem.">
        <title>Mapping of the active site tyrosine of eukaryotic DNA topoisomerase I.</title>
        <authorList>
            <person name="Eng W.-K."/>
            <person name="Pandit S.D."/>
            <person name="Sternglanz R."/>
        </authorList>
    </citation>
    <scope>ACTIVE SITE TYR-773</scope>
</reference>
<reference key="4">
    <citation type="journal article" date="2008" name="J. Proteome Res.">
        <title>Phosphoproteome analysis of fission yeast.</title>
        <authorList>
            <person name="Wilson-Grady J.T."/>
            <person name="Villen J."/>
            <person name="Gygi S.P."/>
        </authorList>
    </citation>
    <scope>PHOSPHORYLATION [LARGE SCALE ANALYSIS] AT SER-52; SER-54; SER-136 AND THR-138</scope>
    <scope>IDENTIFICATION BY MASS SPECTROMETRY</scope>
</reference>
<name>TOP1_SCHPO</name>
<comment type="function">
    <text evidence="1">Releases the supercoiling and torsional tension of DNA introduced during the DNA replication and transcription by transiently cleaving and rejoining one strand of the DNA duplex. Introduces a single-strand break via transesterification at a target site in duplex DNA. The scissile phosphodiester is attacked by the catalytic tyrosine of the enzyme, resulting in the formation of a DNA-(3'-phosphotyrosyl)-enzyme intermediate and the expulsion of a 5'-OH DNA strand. TThe free DNA strand then rotates around the intact phosphodiester bond on the opposing strand, thus removing DNA supercoils. Finally, in the religation step, the DNA 5'-OH attacks the covalent intermediate to expel the active-site tyrosine and restore the DNA phosphodiester backbone (By similarity).</text>
</comment>
<comment type="catalytic activity">
    <reaction evidence="3">
        <text>ATP-independent breakage of single-stranded DNA, followed by passage and rejoining.</text>
        <dbReference type="EC" id="5.6.2.1"/>
    </reaction>
</comment>
<comment type="subunit">
    <text>Monomer.</text>
</comment>
<comment type="miscellaneous">
    <text>Eukaryotic topoisomerase I and II can relax both negative and positive supercoils, whereas prokaryotic enzymes relax only negative supercoils.</text>
</comment>
<comment type="similarity">
    <text evidence="7">Belongs to the type IB topoisomerase family.</text>
</comment>
<feature type="chain" id="PRO_0000145209" description="DNA topoisomerase 1">
    <location>
        <begin position="1"/>
        <end position="814"/>
    </location>
</feature>
<feature type="domain" description="Topo IB-type catalytic" evidence="2">
    <location>
        <begin position="411"/>
        <end position="814"/>
    </location>
</feature>
<feature type="region of interest" description="Disordered" evidence="4">
    <location>
        <begin position="1"/>
        <end position="180"/>
    </location>
</feature>
<feature type="region of interest" description="Interaction with DNA" evidence="1">
    <location>
        <begin position="404"/>
        <end position="405"/>
    </location>
</feature>
<feature type="region of interest" description="Interaction with DNA" evidence="1">
    <location>
        <begin position="467"/>
        <end position="472"/>
    </location>
</feature>
<feature type="region of interest" description="Interaction with DNA" evidence="1">
    <location>
        <begin position="559"/>
        <end position="561"/>
    </location>
</feature>
<feature type="compositionally biased region" description="Low complexity" evidence="4">
    <location>
        <begin position="1"/>
        <end position="12"/>
    </location>
</feature>
<feature type="compositionally biased region" description="Basic residues" evidence="4">
    <location>
        <begin position="13"/>
        <end position="22"/>
    </location>
</feature>
<feature type="active site" description="O-(3'-phospho-DNA)-tyrosine intermediate" evidence="2 3 6">
    <location>
        <position position="773"/>
    </location>
</feature>
<feature type="site" description="Interaction with DNA" evidence="1">
    <location>
        <position position="343"/>
    </location>
</feature>
<feature type="site" description="Interaction with DNA" evidence="1">
    <location>
        <position position="391"/>
    </location>
</feature>
<feature type="site" description="Interaction with DNA" evidence="1">
    <location>
        <position position="422"/>
    </location>
</feature>
<feature type="site" description="Interaction with DNA" evidence="1">
    <location>
        <position position="479"/>
    </location>
</feature>
<feature type="site" description="Interaction with DNA" evidence="1">
    <location>
        <position position="505"/>
    </location>
</feature>
<feature type="site" description="Interaction with DNA" evidence="1">
    <location>
        <position position="548"/>
    </location>
</feature>
<feature type="site" description="Interaction with DNA" evidence="1">
    <location>
        <position position="605"/>
    </location>
</feature>
<feature type="modified residue" description="Phosphoserine" evidence="5">
    <location>
        <position position="52"/>
    </location>
</feature>
<feature type="modified residue" description="Phosphoserine" evidence="5">
    <location>
        <position position="54"/>
    </location>
</feature>
<feature type="modified residue" description="Phosphoserine" evidence="5">
    <location>
        <position position="136"/>
    </location>
</feature>
<feature type="modified residue" description="Phosphothreonine" evidence="5">
    <location>
        <position position="138"/>
    </location>
</feature>
<feature type="sequence conflict" description="In Ref. 1." evidence="7" ref="1">
    <location>
        <begin position="7"/>
        <end position="8"/>
    </location>
</feature>
<feature type="sequence conflict" description="In Ref. 1; CAA29559." evidence="7" ref="1">
    <original>Q</original>
    <variation>E</variation>
    <location>
        <position position="308"/>
    </location>
</feature>
<feature type="sequence conflict" description="In Ref. 1; CAA29559." evidence="7" ref="1">
    <original>S</original>
    <variation>N</variation>
    <location>
        <position position="446"/>
    </location>
</feature>
<feature type="sequence conflict" description="In Ref. 1; CAA29559." evidence="7" ref="1">
    <original>V</original>
    <variation>M</variation>
    <location>
        <position position="698"/>
    </location>
</feature>
<keyword id="KW-0238">DNA-binding</keyword>
<keyword id="KW-0413">Isomerase</keyword>
<keyword id="KW-0597">Phosphoprotein</keyword>
<keyword id="KW-1185">Reference proteome</keyword>
<keyword id="KW-0799">Topoisomerase</keyword>
<organism>
    <name type="scientific">Schizosaccharomyces pombe (strain 972 / ATCC 24843)</name>
    <name type="common">Fission yeast</name>
    <dbReference type="NCBI Taxonomy" id="284812"/>
    <lineage>
        <taxon>Eukaryota</taxon>
        <taxon>Fungi</taxon>
        <taxon>Dikarya</taxon>
        <taxon>Ascomycota</taxon>
        <taxon>Taphrinomycotina</taxon>
        <taxon>Schizosaccharomycetes</taxon>
        <taxon>Schizosaccharomycetales</taxon>
        <taxon>Schizosaccharomycetaceae</taxon>
        <taxon>Schizosaccharomyces</taxon>
    </lineage>
</organism>
<gene>
    <name type="primary">top1</name>
    <name type="ORF">SPBC1703.14c</name>
</gene>
<protein>
    <recommendedName>
        <fullName>DNA topoisomerase 1</fullName>
        <ecNumber evidence="3">5.6.2.1</ecNumber>
    </recommendedName>
    <alternativeName>
        <fullName>DNA topoisomerase I</fullName>
    </alternativeName>
</protein>
<proteinExistence type="evidence at protein level"/>